<comment type="similarity">
    <text evidence="1">Belongs to the bacterial ribosomal protein bL32 family.</text>
</comment>
<feature type="chain" id="PRO_0000296489" description="Large ribosomal subunit protein bL32">
    <location>
        <begin position="1"/>
        <end position="57"/>
    </location>
</feature>
<feature type="region of interest" description="Disordered" evidence="2">
    <location>
        <begin position="1"/>
        <end position="23"/>
    </location>
</feature>
<feature type="compositionally biased region" description="Basic residues" evidence="2">
    <location>
        <begin position="9"/>
        <end position="20"/>
    </location>
</feature>
<reference key="1">
    <citation type="journal article" date="2006" name="Proc. Natl. Acad. Sci. U.S.A.">
        <title>Comparative genomics of the lactic acid bacteria.</title>
        <authorList>
            <person name="Makarova K.S."/>
            <person name="Slesarev A."/>
            <person name="Wolf Y.I."/>
            <person name="Sorokin A."/>
            <person name="Mirkin B."/>
            <person name="Koonin E.V."/>
            <person name="Pavlov A."/>
            <person name="Pavlova N."/>
            <person name="Karamychev V."/>
            <person name="Polouchine N."/>
            <person name="Shakhova V."/>
            <person name="Grigoriev I."/>
            <person name="Lou Y."/>
            <person name="Rohksar D."/>
            <person name="Lucas S."/>
            <person name="Huang K."/>
            <person name="Goodstein D.M."/>
            <person name="Hawkins T."/>
            <person name="Plengvidhya V."/>
            <person name="Welker D."/>
            <person name="Hughes J."/>
            <person name="Goh Y."/>
            <person name="Benson A."/>
            <person name="Baldwin K."/>
            <person name="Lee J.-H."/>
            <person name="Diaz-Muniz I."/>
            <person name="Dosti B."/>
            <person name="Smeianov V."/>
            <person name="Wechter W."/>
            <person name="Barabote R."/>
            <person name="Lorca G."/>
            <person name="Altermann E."/>
            <person name="Barrangou R."/>
            <person name="Ganesan B."/>
            <person name="Xie Y."/>
            <person name="Rawsthorne H."/>
            <person name="Tamir D."/>
            <person name="Parker C."/>
            <person name="Breidt F."/>
            <person name="Broadbent J.R."/>
            <person name="Hutkins R."/>
            <person name="O'Sullivan D."/>
            <person name="Steele J."/>
            <person name="Unlu G."/>
            <person name="Saier M.H. Jr."/>
            <person name="Klaenhammer T."/>
            <person name="Richardson P."/>
            <person name="Kozyavkin S."/>
            <person name="Weimer B.C."/>
            <person name="Mills D.A."/>
        </authorList>
    </citation>
    <scope>NUCLEOTIDE SEQUENCE [LARGE SCALE GENOMIC DNA]</scope>
    <source>
        <strain>SK11</strain>
    </source>
</reference>
<dbReference type="EMBL" id="CP000425">
    <property type="protein sequence ID" value="ABJ71704.1"/>
    <property type="molecule type" value="Genomic_DNA"/>
</dbReference>
<dbReference type="RefSeq" id="WP_010905107.1">
    <property type="nucleotide sequence ID" value="NC_008527.1"/>
</dbReference>
<dbReference type="SMR" id="Q033B8"/>
<dbReference type="GeneID" id="89632239"/>
<dbReference type="KEGG" id="llc:LACR_0077"/>
<dbReference type="HOGENOM" id="CLU_129084_2_1_9"/>
<dbReference type="Proteomes" id="UP000000240">
    <property type="component" value="Chromosome"/>
</dbReference>
<dbReference type="GO" id="GO:0015934">
    <property type="term" value="C:large ribosomal subunit"/>
    <property type="evidence" value="ECO:0007669"/>
    <property type="project" value="InterPro"/>
</dbReference>
<dbReference type="GO" id="GO:0003735">
    <property type="term" value="F:structural constituent of ribosome"/>
    <property type="evidence" value="ECO:0007669"/>
    <property type="project" value="InterPro"/>
</dbReference>
<dbReference type="GO" id="GO:0006412">
    <property type="term" value="P:translation"/>
    <property type="evidence" value="ECO:0007669"/>
    <property type="project" value="UniProtKB-UniRule"/>
</dbReference>
<dbReference type="HAMAP" id="MF_00340">
    <property type="entry name" value="Ribosomal_bL32"/>
    <property type="match status" value="1"/>
</dbReference>
<dbReference type="InterPro" id="IPR002677">
    <property type="entry name" value="Ribosomal_bL32"/>
</dbReference>
<dbReference type="InterPro" id="IPR044957">
    <property type="entry name" value="Ribosomal_bL32_bact"/>
</dbReference>
<dbReference type="InterPro" id="IPR011332">
    <property type="entry name" value="Ribosomal_zn-bd"/>
</dbReference>
<dbReference type="NCBIfam" id="TIGR01031">
    <property type="entry name" value="rpmF_bact"/>
    <property type="match status" value="1"/>
</dbReference>
<dbReference type="PANTHER" id="PTHR35534">
    <property type="entry name" value="50S RIBOSOMAL PROTEIN L32"/>
    <property type="match status" value="1"/>
</dbReference>
<dbReference type="PANTHER" id="PTHR35534:SF1">
    <property type="entry name" value="LARGE RIBOSOMAL SUBUNIT PROTEIN BL32"/>
    <property type="match status" value="1"/>
</dbReference>
<dbReference type="Pfam" id="PF01783">
    <property type="entry name" value="Ribosomal_L32p"/>
    <property type="match status" value="1"/>
</dbReference>
<dbReference type="SUPFAM" id="SSF57829">
    <property type="entry name" value="Zn-binding ribosomal proteins"/>
    <property type="match status" value="1"/>
</dbReference>
<proteinExistence type="inferred from homology"/>
<organism>
    <name type="scientific">Lactococcus lactis subsp. cremoris (strain SK11)</name>
    <dbReference type="NCBI Taxonomy" id="272622"/>
    <lineage>
        <taxon>Bacteria</taxon>
        <taxon>Bacillati</taxon>
        <taxon>Bacillota</taxon>
        <taxon>Bacilli</taxon>
        <taxon>Lactobacillales</taxon>
        <taxon>Streptococcaceae</taxon>
        <taxon>Lactococcus</taxon>
        <taxon>Lactococcus cremoris subsp. cremoris</taxon>
    </lineage>
</organism>
<name>RL32_LACLS</name>
<evidence type="ECO:0000255" key="1">
    <source>
        <dbReference type="HAMAP-Rule" id="MF_00340"/>
    </source>
</evidence>
<evidence type="ECO:0000256" key="2">
    <source>
        <dbReference type="SAM" id="MobiDB-lite"/>
    </source>
</evidence>
<evidence type="ECO:0000305" key="3"/>
<accession>Q033B8</accession>
<keyword id="KW-0687">Ribonucleoprotein</keyword>
<keyword id="KW-0689">Ribosomal protein</keyword>
<sequence length="57" mass="6663">MAVPARHTSSAKKNRRRTHYKLTAPTVTFDETTGDYRHSHRVSLKGYYKGRKVRDTK</sequence>
<protein>
    <recommendedName>
        <fullName evidence="1">Large ribosomal subunit protein bL32</fullName>
    </recommendedName>
    <alternativeName>
        <fullName evidence="3">50S ribosomal protein L32</fullName>
    </alternativeName>
</protein>
<gene>
    <name evidence="1" type="primary">rpmF</name>
    <name type="ordered locus">LACR_0077</name>
</gene>